<proteinExistence type="inferred from homology"/>
<dbReference type="EC" id="1.11.1.26" evidence="1"/>
<dbReference type="EMBL" id="BX571856">
    <property type="protein sequence ID" value="CAG39422.1"/>
    <property type="molecule type" value="Genomic_DNA"/>
</dbReference>
<dbReference type="RefSeq" id="WP_000052781.1">
    <property type="nucleotide sequence ID" value="NC_002952.2"/>
</dbReference>
<dbReference type="SMR" id="Q6GJR7"/>
<dbReference type="KEGG" id="sar:SAR0399"/>
<dbReference type="HOGENOM" id="CLU_042529_21_3_9"/>
<dbReference type="Proteomes" id="UP000000596">
    <property type="component" value="Chromosome"/>
</dbReference>
<dbReference type="GO" id="GO:0005829">
    <property type="term" value="C:cytosol"/>
    <property type="evidence" value="ECO:0007669"/>
    <property type="project" value="TreeGrafter"/>
</dbReference>
<dbReference type="GO" id="GO:0102039">
    <property type="term" value="F:NADH-dependent peroxiredoxin activity"/>
    <property type="evidence" value="ECO:0007669"/>
    <property type="project" value="UniProtKB-EC"/>
</dbReference>
<dbReference type="GO" id="GO:0008379">
    <property type="term" value="F:thioredoxin peroxidase activity"/>
    <property type="evidence" value="ECO:0007669"/>
    <property type="project" value="TreeGrafter"/>
</dbReference>
<dbReference type="GO" id="GO:0045454">
    <property type="term" value="P:cell redox homeostasis"/>
    <property type="evidence" value="ECO:0007669"/>
    <property type="project" value="TreeGrafter"/>
</dbReference>
<dbReference type="GO" id="GO:0033554">
    <property type="term" value="P:cellular response to stress"/>
    <property type="evidence" value="ECO:0007669"/>
    <property type="project" value="TreeGrafter"/>
</dbReference>
<dbReference type="GO" id="GO:0042744">
    <property type="term" value="P:hydrogen peroxide catabolic process"/>
    <property type="evidence" value="ECO:0007669"/>
    <property type="project" value="TreeGrafter"/>
</dbReference>
<dbReference type="GO" id="GO:0006979">
    <property type="term" value="P:response to oxidative stress"/>
    <property type="evidence" value="ECO:0007669"/>
    <property type="project" value="InterPro"/>
</dbReference>
<dbReference type="CDD" id="cd03015">
    <property type="entry name" value="PRX_Typ2cys"/>
    <property type="match status" value="1"/>
</dbReference>
<dbReference type="FunFam" id="3.40.30.10:FF:000002">
    <property type="entry name" value="Alkyl hydroperoxide reductase C"/>
    <property type="match status" value="1"/>
</dbReference>
<dbReference type="Gene3D" id="3.40.30.10">
    <property type="entry name" value="Glutaredoxin"/>
    <property type="match status" value="1"/>
</dbReference>
<dbReference type="InterPro" id="IPR017559">
    <property type="entry name" value="AhpC"/>
</dbReference>
<dbReference type="InterPro" id="IPR000866">
    <property type="entry name" value="AhpC/TSA"/>
</dbReference>
<dbReference type="InterPro" id="IPR050217">
    <property type="entry name" value="Peroxiredoxin"/>
</dbReference>
<dbReference type="InterPro" id="IPR024706">
    <property type="entry name" value="Peroxiredoxin_AhpC-typ"/>
</dbReference>
<dbReference type="InterPro" id="IPR019479">
    <property type="entry name" value="Peroxiredoxin_C"/>
</dbReference>
<dbReference type="InterPro" id="IPR036249">
    <property type="entry name" value="Thioredoxin-like_sf"/>
</dbReference>
<dbReference type="InterPro" id="IPR013766">
    <property type="entry name" value="Thioredoxin_domain"/>
</dbReference>
<dbReference type="NCBIfam" id="TIGR03137">
    <property type="entry name" value="AhpC"/>
    <property type="match status" value="1"/>
</dbReference>
<dbReference type="PANTHER" id="PTHR10681:SF121">
    <property type="entry name" value="ALKYL HYDROPEROXIDE REDUCTASE C"/>
    <property type="match status" value="1"/>
</dbReference>
<dbReference type="PANTHER" id="PTHR10681">
    <property type="entry name" value="THIOREDOXIN PEROXIDASE"/>
    <property type="match status" value="1"/>
</dbReference>
<dbReference type="Pfam" id="PF10417">
    <property type="entry name" value="1-cysPrx_C"/>
    <property type="match status" value="1"/>
</dbReference>
<dbReference type="Pfam" id="PF00578">
    <property type="entry name" value="AhpC-TSA"/>
    <property type="match status" value="1"/>
</dbReference>
<dbReference type="PIRSF" id="PIRSF000239">
    <property type="entry name" value="AHPC"/>
    <property type="match status" value="1"/>
</dbReference>
<dbReference type="SUPFAM" id="SSF52833">
    <property type="entry name" value="Thioredoxin-like"/>
    <property type="match status" value="1"/>
</dbReference>
<dbReference type="PROSITE" id="PS51352">
    <property type="entry name" value="THIOREDOXIN_2"/>
    <property type="match status" value="1"/>
</dbReference>
<reference key="1">
    <citation type="journal article" date="2004" name="Proc. Natl. Acad. Sci. U.S.A.">
        <title>Complete genomes of two clinical Staphylococcus aureus strains: evidence for the rapid evolution of virulence and drug resistance.</title>
        <authorList>
            <person name="Holden M.T.G."/>
            <person name="Feil E.J."/>
            <person name="Lindsay J.A."/>
            <person name="Peacock S.J."/>
            <person name="Day N.P.J."/>
            <person name="Enright M.C."/>
            <person name="Foster T.J."/>
            <person name="Moore C.E."/>
            <person name="Hurst L."/>
            <person name="Atkin R."/>
            <person name="Barron A."/>
            <person name="Bason N."/>
            <person name="Bentley S.D."/>
            <person name="Chillingworth C."/>
            <person name="Chillingworth T."/>
            <person name="Churcher C."/>
            <person name="Clark L."/>
            <person name="Corton C."/>
            <person name="Cronin A."/>
            <person name="Doggett J."/>
            <person name="Dowd L."/>
            <person name="Feltwell T."/>
            <person name="Hance Z."/>
            <person name="Harris B."/>
            <person name="Hauser H."/>
            <person name="Holroyd S."/>
            <person name="Jagels K."/>
            <person name="James K.D."/>
            <person name="Lennard N."/>
            <person name="Line A."/>
            <person name="Mayes R."/>
            <person name="Moule S."/>
            <person name="Mungall K."/>
            <person name="Ormond D."/>
            <person name="Quail M.A."/>
            <person name="Rabbinowitsch E."/>
            <person name="Rutherford K.M."/>
            <person name="Sanders M."/>
            <person name="Sharp S."/>
            <person name="Simmonds M."/>
            <person name="Stevens K."/>
            <person name="Whitehead S."/>
            <person name="Barrell B.G."/>
            <person name="Spratt B.G."/>
            <person name="Parkhill J."/>
        </authorList>
    </citation>
    <scope>NUCLEOTIDE SEQUENCE [LARGE SCALE GENOMIC DNA]</scope>
    <source>
        <strain>MRSA252</strain>
    </source>
</reference>
<organism>
    <name type="scientific">Staphylococcus aureus (strain MRSA252)</name>
    <dbReference type="NCBI Taxonomy" id="282458"/>
    <lineage>
        <taxon>Bacteria</taxon>
        <taxon>Bacillati</taxon>
        <taxon>Bacillota</taxon>
        <taxon>Bacilli</taxon>
        <taxon>Bacillales</taxon>
        <taxon>Staphylococcaceae</taxon>
        <taxon>Staphylococcus</taxon>
    </lineage>
</organism>
<keyword id="KW-0049">Antioxidant</keyword>
<keyword id="KW-0963">Cytoplasm</keyword>
<keyword id="KW-1015">Disulfide bond</keyword>
<keyword id="KW-0560">Oxidoreductase</keyword>
<keyword id="KW-0575">Peroxidase</keyword>
<keyword id="KW-0676">Redox-active center</keyword>
<name>AHPC_STAAR</name>
<feature type="chain" id="PRO_0000135125" description="Alkyl hydroperoxide reductase C">
    <location>
        <begin position="1"/>
        <end position="189"/>
    </location>
</feature>
<feature type="domain" description="Thioredoxin" evidence="3">
    <location>
        <begin position="2"/>
        <end position="159"/>
    </location>
</feature>
<feature type="active site" description="Cysteine sulfenic acid (-SOH) intermediate" evidence="1">
    <location>
        <position position="49"/>
    </location>
</feature>
<feature type="disulfide bond" description="Interchain (with C-168); in linked form" evidence="1">
    <location>
        <position position="49"/>
    </location>
</feature>
<feature type="disulfide bond" description="Interchain (with C-49); in linked form" evidence="1">
    <location>
        <position position="168"/>
    </location>
</feature>
<accession>Q6GJR7</accession>
<evidence type="ECO:0000250" key="1">
    <source>
        <dbReference type="UniProtKB" id="P0A251"/>
    </source>
</evidence>
<evidence type="ECO:0000250" key="2">
    <source>
        <dbReference type="UniProtKB" id="P0AE08"/>
    </source>
</evidence>
<evidence type="ECO:0000255" key="3">
    <source>
        <dbReference type="PROSITE-ProRule" id="PRU00691"/>
    </source>
</evidence>
<evidence type="ECO:0000305" key="4"/>
<gene>
    <name type="primary">ahpC</name>
    <name type="ordered locus">SAR0399</name>
</gene>
<comment type="function">
    <text evidence="1">Thiol-specific peroxidase that catalyzes the reduction of hydrogen peroxide and organic hydroperoxides to water and alcohols, respectively. Plays a role in cell protection against oxidative stress by detoxifying peroxides.</text>
</comment>
<comment type="catalytic activity">
    <reaction evidence="1">
        <text>a hydroperoxide + NADH + H(+) = an alcohol + NAD(+) + H2O</text>
        <dbReference type="Rhea" id="RHEA:62628"/>
        <dbReference type="ChEBI" id="CHEBI:15377"/>
        <dbReference type="ChEBI" id="CHEBI:15378"/>
        <dbReference type="ChEBI" id="CHEBI:30879"/>
        <dbReference type="ChEBI" id="CHEBI:35924"/>
        <dbReference type="ChEBI" id="CHEBI:57540"/>
        <dbReference type="ChEBI" id="CHEBI:57945"/>
        <dbReference type="EC" id="1.11.1.26"/>
    </reaction>
</comment>
<comment type="subunit">
    <text evidence="1">Homodimer; disulfide-linked, upon oxidation. 5 homodimers assemble to form a ring-like decamer.</text>
</comment>
<comment type="subcellular location">
    <subcellularLocation>
        <location evidence="2">Cytoplasm</location>
    </subcellularLocation>
</comment>
<comment type="miscellaneous">
    <text evidence="1">The active site is a conserved redox-active cysteine residue, the peroxidatic cysteine (C(P)), which makes the nucleophilic attack on the peroxide substrate. The peroxide oxidizes the C(P)-SH to cysteine sulfenic acid (C(P)-SOH), which then reacts with another cysteine residue, the resolving cysteine (C(R)), to form a disulfide bridge. The disulfide is subsequently reduced by an appropriate electron donor to complete the catalytic cycle. In this typical 2-Cys peroxiredoxin, C(R) is provided by the other dimeric subunit to form an intersubunit disulfide. The disulfide is subsequently reduced by AhpF.</text>
</comment>
<comment type="similarity">
    <text evidence="4">Belongs to the peroxiredoxin family. AhpC/Prx1 subfamily.</text>
</comment>
<sequence>MSLINKEILPFTAQAFDPKKDQFKEVTQEDLKGSWSVVCFYPADFSFVCPTELEDLQNQYEELQKLGVNVFSVSTDTHFVHKAWHDHSDAISKITYTMIGDPSQTITRNFDVLDEATGLAQRGTFIIDPDGVVQASEINADGIGRDASTLAHKIKAAQYVRKNPGEVCPAKWEEGAKTLQPGLDLVGKI</sequence>
<protein>
    <recommendedName>
        <fullName>Alkyl hydroperoxide reductase C</fullName>
        <ecNumber evidence="1">1.11.1.26</ecNumber>
    </recommendedName>
    <alternativeName>
        <fullName>Peroxiredoxin</fullName>
    </alternativeName>
    <alternativeName>
        <fullName>Thioredoxin peroxidase</fullName>
    </alternativeName>
</protein>